<reference key="1">
    <citation type="submission" date="2007-03" db="EMBL/GenBank/DDBJ databases">
        <title>Complete sequence of Shewanella loihica PV-4.</title>
        <authorList>
            <consortium name="US DOE Joint Genome Institute"/>
            <person name="Copeland A."/>
            <person name="Lucas S."/>
            <person name="Lapidus A."/>
            <person name="Barry K."/>
            <person name="Detter J.C."/>
            <person name="Glavina del Rio T."/>
            <person name="Hammon N."/>
            <person name="Israni S."/>
            <person name="Dalin E."/>
            <person name="Tice H."/>
            <person name="Pitluck S."/>
            <person name="Chain P."/>
            <person name="Malfatti S."/>
            <person name="Shin M."/>
            <person name="Vergez L."/>
            <person name="Schmutz J."/>
            <person name="Larimer F."/>
            <person name="Land M."/>
            <person name="Hauser L."/>
            <person name="Kyrpides N."/>
            <person name="Mikhailova N."/>
            <person name="Romine M.F."/>
            <person name="Serres G."/>
            <person name="Fredrickson J."/>
            <person name="Tiedje J."/>
            <person name="Richardson P."/>
        </authorList>
    </citation>
    <scope>NUCLEOTIDE SEQUENCE [LARGE SCALE GENOMIC DNA]</scope>
    <source>
        <strain>ATCC BAA-1088 / PV-4</strain>
    </source>
</reference>
<accession>A3QAD1</accession>
<protein>
    <recommendedName>
        <fullName evidence="1">Phosphatidylserine decarboxylase proenzyme</fullName>
        <ecNumber evidence="1">4.1.1.65</ecNumber>
    </recommendedName>
    <component>
        <recommendedName>
            <fullName evidence="1">Phosphatidylserine decarboxylase alpha chain</fullName>
        </recommendedName>
    </component>
    <component>
        <recommendedName>
            <fullName evidence="1">Phosphatidylserine decarboxylase beta chain</fullName>
        </recommendedName>
    </component>
</protein>
<name>PSD_SHELP</name>
<proteinExistence type="inferred from homology"/>
<gene>
    <name evidence="1" type="primary">psd</name>
    <name type="ordered locus">Shew_0557</name>
</gene>
<evidence type="ECO:0000255" key="1">
    <source>
        <dbReference type="HAMAP-Rule" id="MF_00662"/>
    </source>
</evidence>
<organism>
    <name type="scientific">Shewanella loihica (strain ATCC BAA-1088 / PV-4)</name>
    <dbReference type="NCBI Taxonomy" id="323850"/>
    <lineage>
        <taxon>Bacteria</taxon>
        <taxon>Pseudomonadati</taxon>
        <taxon>Pseudomonadota</taxon>
        <taxon>Gammaproteobacteria</taxon>
        <taxon>Alteromonadales</taxon>
        <taxon>Shewanellaceae</taxon>
        <taxon>Shewanella</taxon>
    </lineage>
</organism>
<comment type="function">
    <text evidence="1">Catalyzes the formation of phosphatidylethanolamine (PtdEtn) from phosphatidylserine (PtdSer).</text>
</comment>
<comment type="catalytic activity">
    <reaction evidence="1">
        <text>a 1,2-diacyl-sn-glycero-3-phospho-L-serine + H(+) = a 1,2-diacyl-sn-glycero-3-phosphoethanolamine + CO2</text>
        <dbReference type="Rhea" id="RHEA:20828"/>
        <dbReference type="ChEBI" id="CHEBI:15378"/>
        <dbReference type="ChEBI" id="CHEBI:16526"/>
        <dbReference type="ChEBI" id="CHEBI:57262"/>
        <dbReference type="ChEBI" id="CHEBI:64612"/>
        <dbReference type="EC" id="4.1.1.65"/>
    </reaction>
</comment>
<comment type="cofactor">
    <cofactor evidence="1">
        <name>pyruvate</name>
        <dbReference type="ChEBI" id="CHEBI:15361"/>
    </cofactor>
    <text evidence="1">Binds 1 pyruvoyl group covalently per subunit.</text>
</comment>
<comment type="pathway">
    <text evidence="1">Phospholipid metabolism; phosphatidylethanolamine biosynthesis; phosphatidylethanolamine from CDP-diacylglycerol: step 2/2.</text>
</comment>
<comment type="subunit">
    <text evidence="1">Heterodimer of a large membrane-associated beta subunit and a small pyruvoyl-containing alpha subunit.</text>
</comment>
<comment type="subcellular location">
    <subcellularLocation>
        <location evidence="1">Cell membrane</location>
        <topology evidence="1">Peripheral membrane protein</topology>
    </subcellularLocation>
</comment>
<comment type="PTM">
    <text evidence="1">Is synthesized initially as an inactive proenzyme. Formation of the active enzyme involves a self-maturation process in which the active site pyruvoyl group is generated from an internal serine residue via an autocatalytic post-translational modification. Two non-identical subunits are generated from the proenzyme in this reaction, and the pyruvate is formed at the N-terminus of the alpha chain, which is derived from the carboxyl end of the proenzyme. The autoendoproteolytic cleavage occurs by a canonical serine protease mechanism, in which the side chain hydroxyl group of the serine supplies its oxygen atom to form the C-terminus of the beta chain, while the remainder of the serine residue undergoes an oxidative deamination to produce ammonia and the pyruvoyl prosthetic group on the alpha chain. During this reaction, the Ser that is part of the protease active site of the proenzyme becomes the pyruvoyl prosthetic group, which constitutes an essential element of the active site of the mature decarboxylase.</text>
</comment>
<comment type="similarity">
    <text evidence="1">Belongs to the phosphatidylserine decarboxylase family. PSD-B subfamily. Prokaryotic type I sub-subfamily.</text>
</comment>
<dbReference type="EC" id="4.1.1.65" evidence="1"/>
<dbReference type="EMBL" id="CP000606">
    <property type="protein sequence ID" value="ABO22429.1"/>
    <property type="molecule type" value="Genomic_DNA"/>
</dbReference>
<dbReference type="RefSeq" id="WP_011864363.1">
    <property type="nucleotide sequence ID" value="NC_009092.1"/>
</dbReference>
<dbReference type="SMR" id="A3QAD1"/>
<dbReference type="STRING" id="323850.Shew_0557"/>
<dbReference type="KEGG" id="slo:Shew_0557"/>
<dbReference type="eggNOG" id="COG0688">
    <property type="taxonomic scope" value="Bacteria"/>
</dbReference>
<dbReference type="HOGENOM" id="CLU_029061_4_1_6"/>
<dbReference type="OrthoDB" id="9802030at2"/>
<dbReference type="UniPathway" id="UPA00558">
    <property type="reaction ID" value="UER00616"/>
</dbReference>
<dbReference type="Proteomes" id="UP000001558">
    <property type="component" value="Chromosome"/>
</dbReference>
<dbReference type="GO" id="GO:0005886">
    <property type="term" value="C:plasma membrane"/>
    <property type="evidence" value="ECO:0007669"/>
    <property type="project" value="UniProtKB-SubCell"/>
</dbReference>
<dbReference type="GO" id="GO:0004609">
    <property type="term" value="F:phosphatidylserine decarboxylase activity"/>
    <property type="evidence" value="ECO:0007669"/>
    <property type="project" value="UniProtKB-UniRule"/>
</dbReference>
<dbReference type="GO" id="GO:0006646">
    <property type="term" value="P:phosphatidylethanolamine biosynthetic process"/>
    <property type="evidence" value="ECO:0007669"/>
    <property type="project" value="UniProtKB-UniRule"/>
</dbReference>
<dbReference type="HAMAP" id="MF_00662">
    <property type="entry name" value="PS_decarb_PSD_B_type1"/>
    <property type="match status" value="1"/>
</dbReference>
<dbReference type="InterPro" id="IPR003817">
    <property type="entry name" value="PS_Dcarbxylase"/>
</dbReference>
<dbReference type="InterPro" id="IPR033177">
    <property type="entry name" value="PSD-B"/>
</dbReference>
<dbReference type="InterPro" id="IPR033178">
    <property type="entry name" value="PSD_type1_pro"/>
</dbReference>
<dbReference type="NCBIfam" id="TIGR00163">
    <property type="entry name" value="PS_decarb"/>
    <property type="match status" value="1"/>
</dbReference>
<dbReference type="PANTHER" id="PTHR10067">
    <property type="entry name" value="PHOSPHATIDYLSERINE DECARBOXYLASE"/>
    <property type="match status" value="1"/>
</dbReference>
<dbReference type="PANTHER" id="PTHR10067:SF6">
    <property type="entry name" value="PHOSPHATIDYLSERINE DECARBOXYLASE PROENZYME, MITOCHONDRIAL"/>
    <property type="match status" value="1"/>
</dbReference>
<dbReference type="Pfam" id="PF02666">
    <property type="entry name" value="PS_Dcarbxylase"/>
    <property type="match status" value="1"/>
</dbReference>
<keyword id="KW-1003">Cell membrane</keyword>
<keyword id="KW-0210">Decarboxylase</keyword>
<keyword id="KW-0444">Lipid biosynthesis</keyword>
<keyword id="KW-0443">Lipid metabolism</keyword>
<keyword id="KW-0456">Lyase</keyword>
<keyword id="KW-0472">Membrane</keyword>
<keyword id="KW-0594">Phospholipid biosynthesis</keyword>
<keyword id="KW-1208">Phospholipid metabolism</keyword>
<keyword id="KW-0670">Pyruvate</keyword>
<keyword id="KW-1185">Reference proteome</keyword>
<keyword id="KW-0865">Zymogen</keyword>
<feature type="chain" id="PRO_1000026584" description="Phosphatidylserine decarboxylase beta chain" evidence="1">
    <location>
        <begin position="1"/>
        <end position="251"/>
    </location>
</feature>
<feature type="chain" id="PRO_1000026585" description="Phosphatidylserine decarboxylase alpha chain" evidence="1">
    <location>
        <begin position="252"/>
        <end position="286"/>
    </location>
</feature>
<feature type="active site" description="Charge relay system; for autoendoproteolytic cleavage activity" evidence="1">
    <location>
        <position position="89"/>
    </location>
</feature>
<feature type="active site" description="Charge relay system; for autoendoproteolytic cleavage activity" evidence="1">
    <location>
        <position position="146"/>
    </location>
</feature>
<feature type="active site" description="Charge relay system; for autoendoproteolytic cleavage activity" evidence="1">
    <location>
        <position position="252"/>
    </location>
</feature>
<feature type="active site" description="Schiff-base intermediate with substrate; via pyruvic acid; for decarboxylase activity" evidence="1">
    <location>
        <position position="252"/>
    </location>
</feature>
<feature type="site" description="Cleavage (non-hydrolytic); by autocatalysis" evidence="1">
    <location>
        <begin position="251"/>
        <end position="252"/>
    </location>
</feature>
<feature type="modified residue" description="Pyruvic acid (Ser); by autocatalysis" evidence="1">
    <location>
        <position position="252"/>
    </location>
</feature>
<sequence>MDKLKIALQYIMPKHLLSRLVGKLAAAELGAVTTSVIKWFIKQYKIDMSEAAQSAPEAYASFNQFFTRALKPGIRPLCDDDDYIVHPVDGAVSQCGPIKEGRIFQAKGHEYSSLALLGDQADDAKRFEGGDFATIYLAPKDYHRIHMPIKGTLSKMTYVPGELFSVNPLTAENVPGLFARNERVVAIFETEIGPMAMVLVGATIVASIETVWAGTVTPPTGKKVFTWDYPTEGPEAITLDKGEEMGRFKLGSTVVMLFAKDALEHFADGVEPKAVTRMGQAFAKID</sequence>